<protein>
    <recommendedName>
        <fullName evidence="2">Probable peptidoglycan glycosyltransferase FtsW</fullName>
        <shortName evidence="2">PGT</shortName>
        <ecNumber evidence="2">2.4.99.28</ecNumber>
    </recommendedName>
    <alternativeName>
        <fullName evidence="2">Cell division protein FtsW</fullName>
    </alternativeName>
    <alternativeName>
        <fullName evidence="2">Cell wall polymerase</fullName>
    </alternativeName>
    <alternativeName>
        <fullName evidence="2">Peptidoglycan polymerase</fullName>
        <shortName evidence="2">PG polymerase</shortName>
    </alternativeName>
</protein>
<accession>B4RQC6</accession>
<proteinExistence type="inferred from homology"/>
<dbReference type="EC" id="2.4.99.28" evidence="2"/>
<dbReference type="EMBL" id="CP001050">
    <property type="protein sequence ID" value="ACF30462.1"/>
    <property type="molecule type" value="Genomic_DNA"/>
</dbReference>
<dbReference type="SMR" id="B4RQC6"/>
<dbReference type="KEGG" id="ngk:NGK_1823"/>
<dbReference type="HOGENOM" id="CLU_029243_1_1_4"/>
<dbReference type="UniPathway" id="UPA00219"/>
<dbReference type="Proteomes" id="UP000002564">
    <property type="component" value="Chromosome"/>
</dbReference>
<dbReference type="GO" id="GO:0032153">
    <property type="term" value="C:cell division site"/>
    <property type="evidence" value="ECO:0007669"/>
    <property type="project" value="UniProtKB-UniRule"/>
</dbReference>
<dbReference type="GO" id="GO:0005886">
    <property type="term" value="C:plasma membrane"/>
    <property type="evidence" value="ECO:0007669"/>
    <property type="project" value="UniProtKB-SubCell"/>
</dbReference>
<dbReference type="GO" id="GO:0015648">
    <property type="term" value="F:lipid-linked peptidoglycan transporter activity"/>
    <property type="evidence" value="ECO:0007669"/>
    <property type="project" value="TreeGrafter"/>
</dbReference>
<dbReference type="GO" id="GO:0008955">
    <property type="term" value="F:peptidoglycan glycosyltransferase activity"/>
    <property type="evidence" value="ECO:0007669"/>
    <property type="project" value="UniProtKB-UniRule"/>
</dbReference>
<dbReference type="GO" id="GO:0071555">
    <property type="term" value="P:cell wall organization"/>
    <property type="evidence" value="ECO:0007669"/>
    <property type="project" value="UniProtKB-KW"/>
</dbReference>
<dbReference type="GO" id="GO:0043093">
    <property type="term" value="P:FtsZ-dependent cytokinesis"/>
    <property type="evidence" value="ECO:0007669"/>
    <property type="project" value="UniProtKB-UniRule"/>
</dbReference>
<dbReference type="GO" id="GO:0009252">
    <property type="term" value="P:peptidoglycan biosynthetic process"/>
    <property type="evidence" value="ECO:0007669"/>
    <property type="project" value="UniProtKB-UniRule"/>
</dbReference>
<dbReference type="GO" id="GO:0008360">
    <property type="term" value="P:regulation of cell shape"/>
    <property type="evidence" value="ECO:0007669"/>
    <property type="project" value="UniProtKB-KW"/>
</dbReference>
<dbReference type="HAMAP" id="MF_00913">
    <property type="entry name" value="PGT_FtsW_proteobact"/>
    <property type="match status" value="1"/>
</dbReference>
<dbReference type="InterPro" id="IPR018365">
    <property type="entry name" value="Cell_cycle_FtsW-rel_CS"/>
</dbReference>
<dbReference type="InterPro" id="IPR013437">
    <property type="entry name" value="FtsW"/>
</dbReference>
<dbReference type="InterPro" id="IPR001182">
    <property type="entry name" value="FtsW/RodA"/>
</dbReference>
<dbReference type="PANTHER" id="PTHR30474">
    <property type="entry name" value="CELL CYCLE PROTEIN"/>
    <property type="match status" value="1"/>
</dbReference>
<dbReference type="PANTHER" id="PTHR30474:SF2">
    <property type="entry name" value="PEPTIDOGLYCAN GLYCOSYLTRANSFERASE FTSW-RELATED"/>
    <property type="match status" value="1"/>
</dbReference>
<dbReference type="Pfam" id="PF01098">
    <property type="entry name" value="FTSW_RODA_SPOVE"/>
    <property type="match status" value="1"/>
</dbReference>
<dbReference type="PROSITE" id="PS00428">
    <property type="entry name" value="FTSW_RODA_SPOVE"/>
    <property type="match status" value="1"/>
</dbReference>
<organism>
    <name type="scientific">Neisseria gonorrhoeae (strain NCCP11945)</name>
    <dbReference type="NCBI Taxonomy" id="521006"/>
    <lineage>
        <taxon>Bacteria</taxon>
        <taxon>Pseudomonadati</taxon>
        <taxon>Pseudomonadota</taxon>
        <taxon>Betaproteobacteria</taxon>
        <taxon>Neisseriales</taxon>
        <taxon>Neisseriaceae</taxon>
        <taxon>Neisseria</taxon>
    </lineage>
</organism>
<gene>
    <name evidence="2" type="primary">ftsW</name>
    <name type="ordered locus">NGK_1823</name>
</gene>
<feature type="chain" id="PRO_0000415200" description="Probable peptidoglycan glycosyltransferase FtsW">
    <location>
        <begin position="1"/>
        <end position="462"/>
    </location>
</feature>
<feature type="topological domain" description="Cytoplasmic" evidence="1">
    <location>
        <begin position="1"/>
        <end position="63"/>
    </location>
</feature>
<feature type="transmembrane region" description="Helical" evidence="2">
    <location>
        <begin position="64"/>
        <end position="84"/>
    </location>
</feature>
<feature type="topological domain" description="Periplasmic" evidence="1">
    <location>
        <begin position="85"/>
        <end position="97"/>
    </location>
</feature>
<feature type="transmembrane region" description="Helical" evidence="2">
    <location>
        <begin position="98"/>
        <end position="118"/>
    </location>
</feature>
<feature type="topological domain" description="Cytoplasmic" evidence="1">
    <location>
        <begin position="119"/>
        <end position="125"/>
    </location>
</feature>
<feature type="transmembrane region" description="Helical" evidence="2">
    <location>
        <begin position="126"/>
        <end position="146"/>
    </location>
</feature>
<feature type="topological domain" description="Periplasmic" evidence="1">
    <location>
        <begin position="147"/>
        <end position="160"/>
    </location>
</feature>
<feature type="transmembrane region" description="Helical" evidence="2">
    <location>
        <begin position="161"/>
        <end position="181"/>
    </location>
</feature>
<feature type="topological domain" description="Cytoplasmic" evidence="1">
    <location>
        <begin position="182"/>
        <end position="227"/>
    </location>
</feature>
<feature type="transmembrane region" description="Helical" evidence="2">
    <location>
        <begin position="228"/>
        <end position="248"/>
    </location>
</feature>
<feature type="transmembrane region" description="Helical" evidence="2">
    <location>
        <begin position="249"/>
        <end position="269"/>
    </location>
</feature>
<feature type="topological domain" description="Cytoplasmic" evidence="1">
    <location>
        <begin position="270"/>
        <end position="271"/>
    </location>
</feature>
<feature type="transmembrane region" description="Helical" evidence="2">
    <location>
        <begin position="272"/>
        <end position="292"/>
    </location>
</feature>
<feature type="topological domain" description="Periplasmic" evidence="1">
    <location>
        <begin position="293"/>
        <end position="348"/>
    </location>
</feature>
<feature type="transmembrane region" description="Helical" evidence="2">
    <location>
        <begin position="349"/>
        <end position="369"/>
    </location>
</feature>
<feature type="topological domain" description="Cytoplasmic" evidence="1">
    <location>
        <begin position="370"/>
        <end position="386"/>
    </location>
</feature>
<feature type="transmembrane region" description="Helical" evidence="2">
    <location>
        <begin position="387"/>
        <end position="409"/>
    </location>
</feature>
<feature type="topological domain" description="Periplasmic" evidence="1">
    <location>
        <begin position="410"/>
        <end position="424"/>
    </location>
</feature>
<feature type="transmembrane region" description="Helical" evidence="2">
    <location>
        <begin position="425"/>
        <end position="445"/>
    </location>
</feature>
<feature type="topological domain" description="Cytoplasmic" evidence="1">
    <location>
        <begin position="446"/>
        <end position="462"/>
    </location>
</feature>
<evidence type="ECO:0000255" key="1"/>
<evidence type="ECO:0000255" key="2">
    <source>
        <dbReference type="HAMAP-Rule" id="MF_00913"/>
    </source>
</evidence>
<comment type="function">
    <text evidence="2">Peptidoglycan polymerase that is essential for cell division.</text>
</comment>
<comment type="catalytic activity">
    <reaction evidence="2">
        <text>[GlcNAc-(1-&gt;4)-Mur2Ac(oyl-L-Ala-gamma-D-Glu-L-Lys-D-Ala-D-Ala)](n)-di-trans,octa-cis-undecaprenyl diphosphate + beta-D-GlcNAc-(1-&gt;4)-Mur2Ac(oyl-L-Ala-gamma-D-Glu-L-Lys-D-Ala-D-Ala)-di-trans,octa-cis-undecaprenyl diphosphate = [GlcNAc-(1-&gt;4)-Mur2Ac(oyl-L-Ala-gamma-D-Glu-L-Lys-D-Ala-D-Ala)](n+1)-di-trans,octa-cis-undecaprenyl diphosphate + di-trans,octa-cis-undecaprenyl diphosphate + H(+)</text>
        <dbReference type="Rhea" id="RHEA:23708"/>
        <dbReference type="Rhea" id="RHEA-COMP:9602"/>
        <dbReference type="Rhea" id="RHEA-COMP:9603"/>
        <dbReference type="ChEBI" id="CHEBI:15378"/>
        <dbReference type="ChEBI" id="CHEBI:58405"/>
        <dbReference type="ChEBI" id="CHEBI:60033"/>
        <dbReference type="ChEBI" id="CHEBI:78435"/>
        <dbReference type="EC" id="2.4.99.28"/>
    </reaction>
</comment>
<comment type="pathway">
    <text evidence="2">Cell wall biogenesis; peptidoglycan biosynthesis.</text>
</comment>
<comment type="subcellular location">
    <subcellularLocation>
        <location evidence="2">Cell inner membrane</location>
        <topology evidence="2">Multi-pass membrane protein</topology>
    </subcellularLocation>
    <text evidence="2">Localizes to the division septum.</text>
</comment>
<comment type="similarity">
    <text evidence="2">Belongs to the SEDS family. FtsW subfamily.</text>
</comment>
<reference key="1">
    <citation type="journal article" date="2008" name="J. Bacteriol.">
        <title>Complete genome sequence of Neisseria gonorrhoeae NCCP11945.</title>
        <authorList>
            <person name="Chung G.T."/>
            <person name="Yoo J.S."/>
            <person name="Oh H.B."/>
            <person name="Lee Y.S."/>
            <person name="Cha S.H."/>
            <person name="Kim S.J."/>
            <person name="Yoo C.K."/>
        </authorList>
    </citation>
    <scope>NUCLEOTIDE SEQUENCE [LARGE SCALE GENOMIC DNA]</scope>
    <source>
        <strain>NCCP11945</strain>
    </source>
</reference>
<name>FTSW_NEIG2</name>
<sequence>MGCIVCSDGIVCRLKFLPFAAGANRLAGGFLKISEVLVKVGDGVHTLLLDRPIVRDGRKFDAPLLWMVVLMTAFGLLMIYSASVYLASKEGGDQFFYLTRQAGFVVAGLIASGFLWFLCRMRTWRRLVPWIFALSGLLLVAVLIAGREINGATRWIPLGPLNFQPTELFKLAVILYLASLFTRREEVLRSMESLGWQSIWRGTANLIMSATNPQARRETLEMYGRFRAIILPIMLVAFGLVLIMVQPDFGSFVVITVITVGMLFLAGLPWKYFFVLVGSVLGGMVLMITAAPYRVQRVVAFLDPWKDPQGAGYQLTHSLMAIGRGEWFGMGLGASLSKRGFLPEAHTDFIFAIIAEEFGFFGMCVLIFCYGWLVVRAFSIGKQSRDLGLTFNAYIASGIGIWIGIQSFFNIGVNIGALPTKGLTLPLMSYGGSSVFFMLISMMLLLRIDYENRRKMRGYRVE</sequence>
<keyword id="KW-0131">Cell cycle</keyword>
<keyword id="KW-0132">Cell division</keyword>
<keyword id="KW-0997">Cell inner membrane</keyword>
<keyword id="KW-1003">Cell membrane</keyword>
<keyword id="KW-0133">Cell shape</keyword>
<keyword id="KW-0961">Cell wall biogenesis/degradation</keyword>
<keyword id="KW-0328">Glycosyltransferase</keyword>
<keyword id="KW-0472">Membrane</keyword>
<keyword id="KW-0573">Peptidoglycan synthesis</keyword>
<keyword id="KW-0808">Transferase</keyword>
<keyword id="KW-0812">Transmembrane</keyword>
<keyword id="KW-1133">Transmembrane helix</keyword>